<reference key="1">
    <citation type="journal article" date="1997" name="Nature">
        <title>The nucleotide sequence of Saccharomyces cerevisiae chromosome XV.</title>
        <authorList>
            <person name="Dujon B."/>
            <person name="Albermann K."/>
            <person name="Aldea M."/>
            <person name="Alexandraki D."/>
            <person name="Ansorge W."/>
            <person name="Arino J."/>
            <person name="Benes V."/>
            <person name="Bohn C."/>
            <person name="Bolotin-Fukuhara M."/>
            <person name="Bordonne R."/>
            <person name="Boyer J."/>
            <person name="Camasses A."/>
            <person name="Casamayor A."/>
            <person name="Casas C."/>
            <person name="Cheret G."/>
            <person name="Cziepluch C."/>
            <person name="Daignan-Fornier B."/>
            <person name="Dang V.-D."/>
            <person name="de Haan M."/>
            <person name="Delius H."/>
            <person name="Durand P."/>
            <person name="Fairhead C."/>
            <person name="Feldmann H."/>
            <person name="Gaillon L."/>
            <person name="Galisson F."/>
            <person name="Gamo F.-J."/>
            <person name="Gancedo C."/>
            <person name="Goffeau A."/>
            <person name="Goulding S.E."/>
            <person name="Grivell L.A."/>
            <person name="Habbig B."/>
            <person name="Hand N.J."/>
            <person name="Hani J."/>
            <person name="Hattenhorst U."/>
            <person name="Hebling U."/>
            <person name="Hernando Y."/>
            <person name="Herrero E."/>
            <person name="Heumann K."/>
            <person name="Hiesel R."/>
            <person name="Hilger F."/>
            <person name="Hofmann B."/>
            <person name="Hollenberg C.P."/>
            <person name="Hughes B."/>
            <person name="Jauniaux J.-C."/>
            <person name="Kalogeropoulos A."/>
            <person name="Katsoulou C."/>
            <person name="Kordes E."/>
            <person name="Lafuente M.J."/>
            <person name="Landt O."/>
            <person name="Louis E.J."/>
            <person name="Maarse A.C."/>
            <person name="Madania A."/>
            <person name="Mannhaupt G."/>
            <person name="Marck C."/>
            <person name="Martin R.P."/>
            <person name="Mewes H.-W."/>
            <person name="Michaux G."/>
            <person name="Paces V."/>
            <person name="Parle-McDermott A.G."/>
            <person name="Pearson B.M."/>
            <person name="Perrin A."/>
            <person name="Pettersson B."/>
            <person name="Poch O."/>
            <person name="Pohl T.M."/>
            <person name="Poirey R."/>
            <person name="Portetelle D."/>
            <person name="Pujol A."/>
            <person name="Purnelle B."/>
            <person name="Ramezani Rad M."/>
            <person name="Rechmann S."/>
            <person name="Schwager C."/>
            <person name="Schweizer M."/>
            <person name="Sor F."/>
            <person name="Sterky F."/>
            <person name="Tarassov I.A."/>
            <person name="Teodoru C."/>
            <person name="Tettelin H."/>
            <person name="Thierry A."/>
            <person name="Tobiasch E."/>
            <person name="Tzermia M."/>
            <person name="Uhlen M."/>
            <person name="Unseld M."/>
            <person name="Valens M."/>
            <person name="Vandenbol M."/>
            <person name="Vetter I."/>
            <person name="Vlcek C."/>
            <person name="Voet M."/>
            <person name="Volckaert G."/>
            <person name="Voss H."/>
            <person name="Wambutt R."/>
            <person name="Wedler H."/>
            <person name="Wiemann S."/>
            <person name="Winsor B."/>
            <person name="Wolfe K.H."/>
            <person name="Zollner A."/>
            <person name="Zumstein E."/>
            <person name="Kleine K."/>
        </authorList>
    </citation>
    <scope>NUCLEOTIDE SEQUENCE [LARGE SCALE GENOMIC DNA]</scope>
    <source>
        <strain>ATCC 204508 / S288c</strain>
    </source>
</reference>
<reference key="2">
    <citation type="journal article" date="2014" name="G3 (Bethesda)">
        <title>The reference genome sequence of Saccharomyces cerevisiae: Then and now.</title>
        <authorList>
            <person name="Engel S.R."/>
            <person name="Dietrich F.S."/>
            <person name="Fisk D.G."/>
            <person name="Binkley G."/>
            <person name="Balakrishnan R."/>
            <person name="Costanzo M.C."/>
            <person name="Dwight S.S."/>
            <person name="Hitz B.C."/>
            <person name="Karra K."/>
            <person name="Nash R.S."/>
            <person name="Weng S."/>
            <person name="Wong E.D."/>
            <person name="Lloyd P."/>
            <person name="Skrzypek M.S."/>
            <person name="Miyasato S.R."/>
            <person name="Simison M."/>
            <person name="Cherry J.M."/>
        </authorList>
    </citation>
    <scope>GENOME REANNOTATION</scope>
    <source>
        <strain>ATCC 204508 / S288c</strain>
    </source>
</reference>
<reference key="3">
    <citation type="journal article" date="2007" name="J. Proteome Res.">
        <title>Large-scale phosphorylation analysis of alpha-factor-arrested Saccharomyces cerevisiae.</title>
        <authorList>
            <person name="Li X."/>
            <person name="Gerber S.A."/>
            <person name="Rudner A.D."/>
            <person name="Beausoleil S.A."/>
            <person name="Haas W."/>
            <person name="Villen J."/>
            <person name="Elias J.E."/>
            <person name="Gygi S.P."/>
        </authorList>
    </citation>
    <scope>PHOSPHORYLATION [LARGE SCALE ANALYSIS] AT THR-95</scope>
    <scope>IDENTIFICATION BY MASS SPECTROMETRY [LARGE SCALE ANALYSIS]</scope>
    <source>
        <strain>ADR376</strain>
    </source>
</reference>
<reference key="4">
    <citation type="journal article" date="2009" name="Biochem. Biophys. Res. Commun.">
        <title>Cd2+, Mn2+, Ni2+ and Se2+ toxicity to Saccharomyces cerevisiae lacking YPK9p the orthologue of human ATP13A2.</title>
        <authorList>
            <person name="Schmidt K."/>
            <person name="Wolfe D.M."/>
            <person name="Stiller B."/>
            <person name="Pearce D.A."/>
        </authorList>
    </citation>
    <scope>SUBCELLULAR LOCATION</scope>
    <scope>DISRUPTION PHENOTYPE</scope>
    <scope>FUNCTION</scope>
</reference>
<reference key="5">
    <citation type="journal article" date="2009" name="Science">
        <title>Global analysis of Cdk1 substrate phosphorylation sites provides insights into evolution.</title>
        <authorList>
            <person name="Holt L.J."/>
            <person name="Tuch B.B."/>
            <person name="Villen J."/>
            <person name="Johnson A.D."/>
            <person name="Gygi S.P."/>
            <person name="Morgan D.O."/>
        </authorList>
    </citation>
    <scope>PHOSPHORYLATION [LARGE SCALE ANALYSIS] AT THR-95; SER-108; SER-1117 AND SER-1120</scope>
    <scope>IDENTIFICATION BY MASS SPECTROMETRY [LARGE SCALE ANALYSIS]</scope>
</reference>
<reference key="6">
    <citation type="journal article" date="2012" name="Proc. Natl. Acad. Sci. U.S.A.">
        <title>N-terminal acetylome analyses and functional insights of the N-terminal acetyltransferase NatB.</title>
        <authorList>
            <person name="Van Damme P."/>
            <person name="Lasa M."/>
            <person name="Polevoda B."/>
            <person name="Gazquez C."/>
            <person name="Elosegui-Artola A."/>
            <person name="Kim D.S."/>
            <person name="De Juan-Pardo E."/>
            <person name="Demeyer K."/>
            <person name="Hole K."/>
            <person name="Larrea E."/>
            <person name="Timmerman E."/>
            <person name="Prieto J."/>
            <person name="Arnesen T."/>
            <person name="Sherman F."/>
            <person name="Gevaert K."/>
            <person name="Aldabe R."/>
        </authorList>
    </citation>
    <scope>ACETYLATION [LARGE SCALE ANALYSIS] AT MET-1</scope>
    <scope>IDENTIFICATION BY MASS SPECTROMETRY [LARGE SCALE ANALYSIS]</scope>
</reference>
<reference key="7">
    <citation type="journal article" date="2014" name="Hum. Mol. Genet.">
        <title>Parkinson's disease-linked human PARK9/ATP13A2 maintains zinc homeostasis and promotes alpha-Synuclein externalization via exosomes.</title>
        <authorList>
            <person name="Kong S.M."/>
            <person name="Chan B.K."/>
            <person name="Park J.S."/>
            <person name="Hill K.J."/>
            <person name="Aitken J.B."/>
            <person name="Cottle L."/>
            <person name="Farghaian H."/>
            <person name="Cole A.R."/>
            <person name="Lay P.A."/>
            <person name="Sue C.M."/>
            <person name="Cooper A.A."/>
        </authorList>
    </citation>
    <scope>FUNCTION</scope>
    <scope>DISRUPTION PHENOTYPE</scope>
</reference>
<name>YPK9_YEAST</name>
<organism>
    <name type="scientific">Saccharomyces cerevisiae (strain ATCC 204508 / S288c)</name>
    <name type="common">Baker's yeast</name>
    <dbReference type="NCBI Taxonomy" id="559292"/>
    <lineage>
        <taxon>Eukaryota</taxon>
        <taxon>Fungi</taxon>
        <taxon>Dikarya</taxon>
        <taxon>Ascomycota</taxon>
        <taxon>Saccharomycotina</taxon>
        <taxon>Saccharomycetes</taxon>
        <taxon>Saccharomycetales</taxon>
        <taxon>Saccharomycetaceae</taxon>
        <taxon>Saccharomyces</taxon>
    </lineage>
</organism>
<comment type="function">
    <text evidence="4 5">Vacuolar transporter which plays a role in sequestration of divalent heavy metal ions.</text>
</comment>
<comment type="catalytic activity">
    <reaction>
        <text>ATP + H2O = ADP + phosphate + H(+)</text>
        <dbReference type="Rhea" id="RHEA:13065"/>
        <dbReference type="ChEBI" id="CHEBI:15377"/>
        <dbReference type="ChEBI" id="CHEBI:15378"/>
        <dbReference type="ChEBI" id="CHEBI:30616"/>
        <dbReference type="ChEBI" id="CHEBI:43474"/>
        <dbReference type="ChEBI" id="CHEBI:456216"/>
    </reaction>
</comment>
<comment type="subcellular location">
    <subcellularLocation>
        <location evidence="4">Vacuole membrane</location>
        <topology evidence="4">Multi-pass membrane protein</topology>
    </subcellularLocation>
</comment>
<comment type="disruption phenotype">
    <text evidence="4 5">Confers sensitivity for growth for cadmium, manganese, nickel, selenium and iron.</text>
</comment>
<comment type="similarity">
    <text evidence="6">Belongs to the cation transport ATPase (P-type) (TC 3.A.3) family. Type V subfamily.</text>
</comment>
<sequence>MDIPSSNQIQHGQRSERNRRMPRASFSSTATTSTAATLTSAMVLDQNNSEPYAGATFEAVPSSIVSFHHPHSFQSSNLPSPHSSGNLEQRGRRLTESEPLVLSSAEQSRSSSRNPSHFRFFTQEQISNAEGASTLENTDYDMAWDATPAYEQDRIYGTGLSSRRSSIRSFSRASSLSNAKSYGSFSKRGRSGSRAPQRLGENSDTGFVYHSATHSSSSLSRYTTRERIPIELESQTDEILEDESSTHSLESSDSRRSASENNRGSFSGHDDVHNQHSEYLKPDYHEKFYPQYAPNLHYQRFYIAEEDLVIGIAAYQTSKFWYIIYNLCCFLTFGLVYLLTRWLPHLKVKLYGVKVPLAKAEWVVIENEFGEFVIQPIDRQWYNRPLSTVLPFENYPNPSYEPNDINLSHHHANEINPNVPILITFEYRYIKFIYSPLDDLFKTNNNWIDPDWVDLSTVSNGLTKGVQEDRELAFGKNQINLRMKTTSEILFNEVLHPFYVFQVFSIILWGIDEYYYYAACIFLISVLSIFDSLNEQKKVSRNLAEMSHFHCDVRVLRDKFWTTISSSELVPGDIYEVSDPNITILPCDSILLSSDCIVNESMLTGESVPVSKFPATEETMYQLCDDFQSTQISSFVSKSFLYNGTNIIRARIAPGQTAALAMVVRTGFSTTKGSLVRSMVFPKPTGFKFYRDSFKYIGFMSLIAIFGFCVSCVQFIKLGLDKKTMILRALDIITIVVPPALPATLTIGTNFALSRLKEKGIFCISPTRLNISGKIDVMCFDKTGTLTEDGLDVLGVQISEPNGVRGQKFGELLSDIRQVFPKFSLNDCSSPLDFKSRNFFMSLLTCHSLRSVDGNLLGDPLDFKMFQFTGWSFEEDFQKRAFHSLYEGRHEDDVFPENSEIIPAVVHPDSNNRENTFTDNDPHNFLGVVRSFEFLSELRRMSVIVKTNNDDVYWSFTKGAPEVISEICNKSTLPADFEEVLRCYTHNGYRVIACAGKTLPKRTWLYSQKVSREEVESNLEFLGFIIFQNKLKKETSETLKSLQDANIRTIMCTGDNILTAISVGREAGLIQCSRVYVPSINDTPLHGEPVIVWRDVNEPDKILDTKTLKPVKLGNNSVESLRECNYTLAVSGDVFRLLFRDENEIPEEYLNEILLNSSIYARMSPDEKHELMIQLQKLDYTVGFCGDGANDCGALKAADVGISLSEAEASVAAPFTSKIFNISCVLDVIREGRAALVTSFACFQYMSLYSAIQFITITILYSRGSNLGDFQFLYIDLLLIVPIAICMSWSKSYEKIDKKRPSANLVSPKILVPLLISVFLVFLFQFIPWIIVQKMSWYIKPIVGGDDAVQSSDNTVLFFVSNFQYILTAIVLSVGPPYREPMSKNFEFIVDITVSIGASLLLMTLDTESYLGKMLQLTPISNSFTMFIIVWVILNYYAQLYIPPSIKGWLKKKKSSKKYKLLIQEEMKLKEV</sequence>
<keyword id="KW-0007">Acetylation</keyword>
<keyword id="KW-0067">ATP-binding</keyword>
<keyword id="KW-0460">Magnesium</keyword>
<keyword id="KW-0472">Membrane</keyword>
<keyword id="KW-0479">Metal-binding</keyword>
<keyword id="KW-0547">Nucleotide-binding</keyword>
<keyword id="KW-0597">Phosphoprotein</keyword>
<keyword id="KW-1185">Reference proteome</keyword>
<keyword id="KW-1278">Translocase</keyword>
<keyword id="KW-0812">Transmembrane</keyword>
<keyword id="KW-1133">Transmembrane helix</keyword>
<keyword id="KW-0926">Vacuole</keyword>
<proteinExistence type="evidence at protein level"/>
<protein>
    <recommendedName>
        <fullName>Vacuolar cation-transporting ATPase YPK9</fullName>
        <ecNumber>7.2.2.-</ecNumber>
    </recommendedName>
    <alternativeName>
        <fullName>PARK9 homolog</fullName>
    </alternativeName>
</protein>
<evidence type="ECO:0000250" key="1"/>
<evidence type="ECO:0000255" key="2"/>
<evidence type="ECO:0000256" key="3">
    <source>
        <dbReference type="SAM" id="MobiDB-lite"/>
    </source>
</evidence>
<evidence type="ECO:0000269" key="4">
    <source>
    </source>
</evidence>
<evidence type="ECO:0000269" key="5">
    <source>
    </source>
</evidence>
<evidence type="ECO:0000305" key="6"/>
<evidence type="ECO:0007744" key="7">
    <source>
    </source>
</evidence>
<evidence type="ECO:0007744" key="8">
    <source>
    </source>
</evidence>
<evidence type="ECO:0007744" key="9">
    <source>
    </source>
</evidence>
<accession>Q12697</accession>
<accession>D6W2Y9</accession>
<dbReference type="EC" id="7.2.2.-"/>
<dbReference type="EMBL" id="Z75199">
    <property type="protein sequence ID" value="CAA99518.1"/>
    <property type="molecule type" value="Genomic_DNA"/>
</dbReference>
<dbReference type="EMBL" id="BK006948">
    <property type="protein sequence ID" value="DAA11055.1"/>
    <property type="molecule type" value="Genomic_DNA"/>
</dbReference>
<dbReference type="PIR" id="S67195">
    <property type="entry name" value="S67195"/>
</dbReference>
<dbReference type="RefSeq" id="NP_014934.1">
    <property type="nucleotide sequence ID" value="NM_001183710.1"/>
</dbReference>
<dbReference type="SMR" id="Q12697"/>
<dbReference type="BioGRID" id="34679">
    <property type="interactions" value="164"/>
</dbReference>
<dbReference type="FunCoup" id="Q12697">
    <property type="interactions" value="434"/>
</dbReference>
<dbReference type="IntAct" id="Q12697">
    <property type="interactions" value="20"/>
</dbReference>
<dbReference type="STRING" id="4932.YOR291W"/>
<dbReference type="TCDB" id="3.A.3.10.8">
    <property type="family name" value="the p-type atpase (p-atpase) superfamily"/>
</dbReference>
<dbReference type="GlyGen" id="Q12697">
    <property type="glycosylation" value="1 site"/>
</dbReference>
<dbReference type="iPTMnet" id="Q12697"/>
<dbReference type="PaxDb" id="4932-YOR291W"/>
<dbReference type="PeptideAtlas" id="Q12697"/>
<dbReference type="EnsemblFungi" id="YOR291W_mRNA">
    <property type="protein sequence ID" value="YOR291W"/>
    <property type="gene ID" value="YOR291W"/>
</dbReference>
<dbReference type="GeneID" id="854466"/>
<dbReference type="KEGG" id="sce:YOR291W"/>
<dbReference type="AGR" id="SGD:S000005817"/>
<dbReference type="SGD" id="S000005817">
    <property type="gene designation" value="YPK9"/>
</dbReference>
<dbReference type="VEuPathDB" id="FungiDB:YOR291W"/>
<dbReference type="eggNOG" id="KOG0208">
    <property type="taxonomic scope" value="Eukaryota"/>
</dbReference>
<dbReference type="GeneTree" id="ENSGT00940000168207"/>
<dbReference type="HOGENOM" id="CLU_001828_1_0_1"/>
<dbReference type="InParanoid" id="Q12697"/>
<dbReference type="OMA" id="FSCFQYM"/>
<dbReference type="OrthoDB" id="48943at2759"/>
<dbReference type="BioCyc" id="YEAST:G3O-33776-MONOMER"/>
<dbReference type="Reactome" id="R-SCE-936837">
    <property type="pathway name" value="Ion transport by P-type ATPases"/>
</dbReference>
<dbReference type="BioGRID-ORCS" id="854466">
    <property type="hits" value="0 hits in 10 CRISPR screens"/>
</dbReference>
<dbReference type="PRO" id="PR:Q12697"/>
<dbReference type="Proteomes" id="UP000002311">
    <property type="component" value="Chromosome XV"/>
</dbReference>
<dbReference type="RNAct" id="Q12697">
    <property type="molecule type" value="protein"/>
</dbReference>
<dbReference type="GO" id="GO:0000329">
    <property type="term" value="C:fungal-type vacuole membrane"/>
    <property type="evidence" value="ECO:0000314"/>
    <property type="project" value="SGD"/>
</dbReference>
<dbReference type="GO" id="GO:0016020">
    <property type="term" value="C:membrane"/>
    <property type="evidence" value="ECO:0000318"/>
    <property type="project" value="GO_Central"/>
</dbReference>
<dbReference type="GO" id="GO:1990816">
    <property type="term" value="C:vacuole-mitochondrion membrane contact site"/>
    <property type="evidence" value="ECO:0000314"/>
    <property type="project" value="SGD"/>
</dbReference>
<dbReference type="GO" id="GO:0005524">
    <property type="term" value="F:ATP binding"/>
    <property type="evidence" value="ECO:0007669"/>
    <property type="project" value="UniProtKB-KW"/>
</dbReference>
<dbReference type="GO" id="GO:0016887">
    <property type="term" value="F:ATP hydrolysis activity"/>
    <property type="evidence" value="ECO:0007669"/>
    <property type="project" value="InterPro"/>
</dbReference>
<dbReference type="GO" id="GO:0019829">
    <property type="term" value="F:ATPase-coupled monoatomic cation transmembrane transporter activity"/>
    <property type="evidence" value="ECO:0000318"/>
    <property type="project" value="GO_Central"/>
</dbReference>
<dbReference type="GO" id="GO:1903135">
    <property type="term" value="F:cupric ion binding"/>
    <property type="evidence" value="ECO:0000314"/>
    <property type="project" value="ParkinsonsUK-UCL"/>
</dbReference>
<dbReference type="GO" id="GO:0030145">
    <property type="term" value="F:manganese ion binding"/>
    <property type="evidence" value="ECO:0000314"/>
    <property type="project" value="ParkinsonsUK-UCL"/>
</dbReference>
<dbReference type="GO" id="GO:0015662">
    <property type="term" value="F:P-type ion transporter activity"/>
    <property type="evidence" value="ECO:0000250"/>
    <property type="project" value="SGD"/>
</dbReference>
<dbReference type="GO" id="GO:0008270">
    <property type="term" value="F:zinc ion binding"/>
    <property type="evidence" value="ECO:0000314"/>
    <property type="project" value="ParkinsonsUK-UCL"/>
</dbReference>
<dbReference type="GO" id="GO:0006874">
    <property type="term" value="P:intracellular calcium ion homeostasis"/>
    <property type="evidence" value="ECO:0000318"/>
    <property type="project" value="GO_Central"/>
</dbReference>
<dbReference type="GO" id="GO:0030026">
    <property type="term" value="P:intracellular manganese ion homeostasis"/>
    <property type="evidence" value="ECO:0000315"/>
    <property type="project" value="ParkinsonsUK-UCL"/>
</dbReference>
<dbReference type="GO" id="GO:0006882">
    <property type="term" value="P:intracellular zinc ion homeostasis"/>
    <property type="evidence" value="ECO:0000315"/>
    <property type="project" value="ParkinsonsUK-UCL"/>
</dbReference>
<dbReference type="GO" id="GO:0055085">
    <property type="term" value="P:transmembrane transport"/>
    <property type="evidence" value="ECO:0000250"/>
    <property type="project" value="SGD"/>
</dbReference>
<dbReference type="CDD" id="cd07542">
    <property type="entry name" value="P-type_ATPase_cation"/>
    <property type="match status" value="1"/>
</dbReference>
<dbReference type="FunFam" id="1.20.1110.10:FF:000032">
    <property type="entry name" value="Cation-transporting ATPase"/>
    <property type="match status" value="1"/>
</dbReference>
<dbReference type="FunFam" id="2.70.150.10:FF:000064">
    <property type="entry name" value="Cation-transporting ATPase"/>
    <property type="match status" value="1"/>
</dbReference>
<dbReference type="FunFam" id="3.40.1110.10:FF:000125">
    <property type="entry name" value="Cation-transporting ATPase"/>
    <property type="match status" value="1"/>
</dbReference>
<dbReference type="FunFam" id="3.40.50.1000:FF:000068">
    <property type="entry name" value="Cation-transporting ATPase"/>
    <property type="match status" value="1"/>
</dbReference>
<dbReference type="Gene3D" id="3.40.1110.10">
    <property type="entry name" value="Calcium-transporting ATPase, cytoplasmic domain N"/>
    <property type="match status" value="1"/>
</dbReference>
<dbReference type="Gene3D" id="2.70.150.10">
    <property type="entry name" value="Calcium-transporting ATPase, cytoplasmic transduction domain A"/>
    <property type="match status" value="1"/>
</dbReference>
<dbReference type="Gene3D" id="3.40.50.1000">
    <property type="entry name" value="HAD superfamily/HAD-like"/>
    <property type="match status" value="1"/>
</dbReference>
<dbReference type="InterPro" id="IPR023299">
    <property type="entry name" value="ATPase_P-typ_cyto_dom_N"/>
</dbReference>
<dbReference type="InterPro" id="IPR018303">
    <property type="entry name" value="ATPase_P-typ_P_site"/>
</dbReference>
<dbReference type="InterPro" id="IPR023298">
    <property type="entry name" value="ATPase_P-typ_TM_dom_sf"/>
</dbReference>
<dbReference type="InterPro" id="IPR008250">
    <property type="entry name" value="ATPase_P-typ_transduc_dom_A_sf"/>
</dbReference>
<dbReference type="InterPro" id="IPR036412">
    <property type="entry name" value="HAD-like_sf"/>
</dbReference>
<dbReference type="InterPro" id="IPR023214">
    <property type="entry name" value="HAD_sf"/>
</dbReference>
<dbReference type="InterPro" id="IPR006544">
    <property type="entry name" value="P-type_TPase_V"/>
</dbReference>
<dbReference type="InterPro" id="IPR047819">
    <property type="entry name" value="P5A-ATPase_N"/>
</dbReference>
<dbReference type="InterPro" id="IPR047821">
    <property type="entry name" value="P5B-type_ATPase"/>
</dbReference>
<dbReference type="InterPro" id="IPR001757">
    <property type="entry name" value="P_typ_ATPase"/>
</dbReference>
<dbReference type="InterPro" id="IPR044492">
    <property type="entry name" value="P_typ_ATPase_HD_dom"/>
</dbReference>
<dbReference type="NCBIfam" id="TIGR01494">
    <property type="entry name" value="ATPase_P-type"/>
    <property type="match status" value="2"/>
</dbReference>
<dbReference type="NCBIfam" id="TIGR01657">
    <property type="entry name" value="P-ATPase-V"/>
    <property type="match status" value="1"/>
</dbReference>
<dbReference type="PANTHER" id="PTHR45630:SF8">
    <property type="entry name" value="CATION-TRANSPORTING ATPASE"/>
    <property type="match status" value="1"/>
</dbReference>
<dbReference type="PANTHER" id="PTHR45630">
    <property type="entry name" value="CATION-TRANSPORTING ATPASE-RELATED"/>
    <property type="match status" value="1"/>
</dbReference>
<dbReference type="Pfam" id="PF13246">
    <property type="entry name" value="Cation_ATPase"/>
    <property type="match status" value="1"/>
</dbReference>
<dbReference type="Pfam" id="PF00122">
    <property type="entry name" value="E1-E2_ATPase"/>
    <property type="match status" value="1"/>
</dbReference>
<dbReference type="Pfam" id="PF12409">
    <property type="entry name" value="P5-ATPase"/>
    <property type="match status" value="1"/>
</dbReference>
<dbReference type="PRINTS" id="PR00119">
    <property type="entry name" value="CATATPASE"/>
</dbReference>
<dbReference type="SFLD" id="SFLDG00002">
    <property type="entry name" value="C1.7:_P-type_atpase_like"/>
    <property type="match status" value="1"/>
</dbReference>
<dbReference type="SFLD" id="SFLDF00027">
    <property type="entry name" value="p-type_atpase"/>
    <property type="match status" value="1"/>
</dbReference>
<dbReference type="SUPFAM" id="SSF81653">
    <property type="entry name" value="Calcium ATPase, transduction domain A"/>
    <property type="match status" value="1"/>
</dbReference>
<dbReference type="SUPFAM" id="SSF81665">
    <property type="entry name" value="Calcium ATPase, transmembrane domain M"/>
    <property type="match status" value="1"/>
</dbReference>
<dbReference type="SUPFAM" id="SSF56784">
    <property type="entry name" value="HAD-like"/>
    <property type="match status" value="1"/>
</dbReference>
<dbReference type="PROSITE" id="PS00154">
    <property type="entry name" value="ATPASE_E1_E2"/>
    <property type="match status" value="1"/>
</dbReference>
<feature type="chain" id="PRO_0000046351" description="Vacuolar cation-transporting ATPase YPK9">
    <location>
        <begin position="1"/>
        <end position="1472"/>
    </location>
</feature>
<feature type="topological domain" description="Cytoplasmic" evidence="2">
    <location>
        <begin position="1"/>
        <end position="293"/>
    </location>
</feature>
<feature type="transmembrane region" description="Helical" evidence="2">
    <location>
        <begin position="294"/>
        <end position="315"/>
    </location>
</feature>
<feature type="topological domain" description="Vacuolar" evidence="2">
    <location>
        <begin position="316"/>
        <end position="321"/>
    </location>
</feature>
<feature type="transmembrane region" description="Helical" evidence="2">
    <location>
        <begin position="322"/>
        <end position="344"/>
    </location>
</feature>
<feature type="topological domain" description="Cytoplasmic" evidence="2">
    <location>
        <begin position="345"/>
        <end position="488"/>
    </location>
</feature>
<feature type="transmembrane region" description="Helical" evidence="2">
    <location>
        <begin position="489"/>
        <end position="511"/>
    </location>
</feature>
<feature type="topological domain" description="Vacuolar" evidence="2">
    <location>
        <begin position="512"/>
        <end position="514"/>
    </location>
</feature>
<feature type="transmembrane region" description="Helical" evidence="2">
    <location>
        <begin position="515"/>
        <end position="533"/>
    </location>
</feature>
<feature type="topological domain" description="Cytoplasmic" evidence="2">
    <location>
        <begin position="534"/>
        <end position="693"/>
    </location>
</feature>
<feature type="transmembrane region" description="Helical" evidence="2">
    <location>
        <begin position="694"/>
        <end position="713"/>
    </location>
</feature>
<feature type="topological domain" description="Vacuolar" evidence="2">
    <location>
        <begin position="714"/>
        <end position="726"/>
    </location>
</feature>
<feature type="transmembrane region" description="Helical" evidence="2">
    <location>
        <begin position="727"/>
        <end position="748"/>
    </location>
</feature>
<feature type="topological domain" description="Cytoplasmic" evidence="2">
    <location>
        <begin position="749"/>
        <end position="1244"/>
    </location>
</feature>
<feature type="transmembrane region" description="Helical" evidence="2">
    <location>
        <begin position="1245"/>
        <end position="1264"/>
    </location>
</feature>
<feature type="topological domain" description="Vacuolar" evidence="2">
    <location>
        <begin position="1265"/>
        <end position="1271"/>
    </location>
</feature>
<feature type="transmembrane region" description="Helical" evidence="2">
    <location>
        <begin position="1272"/>
        <end position="1289"/>
    </location>
</feature>
<feature type="topological domain" description="Cytoplasmic" evidence="2">
    <location>
        <begin position="1290"/>
        <end position="1307"/>
    </location>
</feature>
<feature type="transmembrane region" description="Helical" evidence="2">
    <location>
        <begin position="1308"/>
        <end position="1331"/>
    </location>
</feature>
<feature type="topological domain" description="Vacuolar" evidence="2">
    <location>
        <begin position="1332"/>
        <end position="1351"/>
    </location>
</feature>
<feature type="transmembrane region" description="Helical" evidence="2">
    <location>
        <begin position="1352"/>
        <end position="1374"/>
    </location>
</feature>
<feature type="topological domain" description="Cytoplasmic" evidence="2">
    <location>
        <begin position="1375"/>
        <end position="1387"/>
    </location>
</feature>
<feature type="transmembrane region" description="Helical" evidence="2">
    <location>
        <begin position="1388"/>
        <end position="1407"/>
    </location>
</feature>
<feature type="topological domain" description="Vacuolar" evidence="2">
    <location>
        <begin position="1408"/>
        <end position="1423"/>
    </location>
</feature>
<feature type="transmembrane region" description="Helical" evidence="2">
    <location>
        <begin position="1424"/>
        <end position="1446"/>
    </location>
</feature>
<feature type="topological domain" description="Cytoplasmic" evidence="2">
    <location>
        <begin position="1447"/>
        <end position="1472"/>
    </location>
</feature>
<feature type="region of interest" description="Disordered" evidence="3">
    <location>
        <begin position="1"/>
        <end position="32"/>
    </location>
</feature>
<feature type="region of interest" description="Disordered" evidence="3">
    <location>
        <begin position="71"/>
        <end position="115"/>
    </location>
</feature>
<feature type="region of interest" description="Disordered" evidence="3">
    <location>
        <begin position="179"/>
        <end position="273"/>
    </location>
</feature>
<feature type="compositionally biased region" description="Polar residues" evidence="3">
    <location>
        <begin position="1"/>
        <end position="12"/>
    </location>
</feature>
<feature type="compositionally biased region" description="Polar residues" evidence="3">
    <location>
        <begin position="72"/>
        <end position="87"/>
    </location>
</feature>
<feature type="compositionally biased region" description="Low complexity" evidence="3">
    <location>
        <begin position="103"/>
        <end position="115"/>
    </location>
</feature>
<feature type="compositionally biased region" description="Low complexity" evidence="3">
    <location>
        <begin position="211"/>
        <end position="222"/>
    </location>
</feature>
<feature type="compositionally biased region" description="Acidic residues" evidence="3">
    <location>
        <begin position="234"/>
        <end position="243"/>
    </location>
</feature>
<feature type="active site" description="4-aspartylphosphate intermediate" evidence="1">
    <location>
        <position position="781"/>
    </location>
</feature>
<feature type="binding site" evidence="1">
    <location>
        <position position="1187"/>
    </location>
    <ligand>
        <name>Mg(2+)</name>
        <dbReference type="ChEBI" id="CHEBI:18420"/>
    </ligand>
</feature>
<feature type="binding site" evidence="1">
    <location>
        <position position="1191"/>
    </location>
    <ligand>
        <name>Mg(2+)</name>
        <dbReference type="ChEBI" id="CHEBI:18420"/>
    </ligand>
</feature>
<feature type="modified residue" description="N-acetylmethionine" evidence="9">
    <location>
        <position position="1"/>
    </location>
</feature>
<feature type="modified residue" description="Phosphothreonine" evidence="7 8">
    <location>
        <position position="95"/>
    </location>
</feature>
<feature type="modified residue" description="Phosphoserine" evidence="8">
    <location>
        <position position="108"/>
    </location>
</feature>
<feature type="modified residue" description="Phosphoserine" evidence="8">
    <location>
        <position position="1117"/>
    </location>
</feature>
<feature type="modified residue" description="Phosphoserine" evidence="8">
    <location>
        <position position="1120"/>
    </location>
</feature>
<gene>
    <name type="primary">YPK9</name>
    <name type="ordered locus">YOR291W</name>
</gene>